<evidence type="ECO:0000305" key="1"/>
<organism>
    <name type="scientific">Staphylococcus aureus</name>
    <dbReference type="NCBI Taxonomy" id="1280"/>
    <lineage>
        <taxon>Bacteria</taxon>
        <taxon>Bacillati</taxon>
        <taxon>Bacillota</taxon>
        <taxon>Bacilli</taxon>
        <taxon>Bacillales</taxon>
        <taxon>Staphylococcaceae</taxon>
        <taxon>Staphylococcus</taxon>
    </lineage>
</organism>
<dbReference type="EMBL" id="M59209">
    <property type="protein sequence ID" value="AAA25602.1"/>
    <property type="molecule type" value="Genomic_DNA"/>
</dbReference>
<dbReference type="PIR" id="A36141">
    <property type="entry name" value="A36141"/>
</dbReference>
<dbReference type="RefSeq" id="WP_006308237.1">
    <property type="nucleotide sequence ID" value="NZ_WWFR01000017.1"/>
</dbReference>
<dbReference type="SMR" id="P25921"/>
<dbReference type="GeneID" id="93867926"/>
<dbReference type="GO" id="GO:0003677">
    <property type="term" value="F:DNA binding"/>
    <property type="evidence" value="ECO:0007669"/>
    <property type="project" value="UniProtKB-KW"/>
</dbReference>
<dbReference type="GO" id="GO:0008156">
    <property type="term" value="P:negative regulation of DNA replication"/>
    <property type="evidence" value="ECO:0007669"/>
    <property type="project" value="UniProtKB-KW"/>
</dbReference>
<dbReference type="GO" id="GO:0006276">
    <property type="term" value="P:plasmid maintenance"/>
    <property type="evidence" value="ECO:0007669"/>
    <property type="project" value="UniProtKB-KW"/>
</dbReference>
<dbReference type="CDD" id="cd22232">
    <property type="entry name" value="RHH_CopG_Cop6-like"/>
    <property type="match status" value="1"/>
</dbReference>
<accession>P25921</accession>
<reference key="1">
    <citation type="journal article" date="1990" name="J. Bacteriol.">
        <title>Replication genes of plasmid pE194-cop and repF: transcripts and encoded proteins.</title>
        <authorList>
            <person name="Byeon W.H."/>
            <person name="Weisblum B."/>
        </authorList>
    </citation>
    <scope>NUCLEOTIDE SEQUENCE [GENOMIC DNA]</scope>
    <scope>PROTEIN SEQUENCE OF 1-12</scope>
</reference>
<name>COP6_STAAU</name>
<sequence length="55" mass="6405">MVVDRKEEKKVAVTLRLTTEENEILNRIKEKYNISKSDATGILIKKYAKEEYGAF</sequence>
<protein>
    <recommendedName>
        <fullName>Cop-6 protein</fullName>
    </recommendedName>
</protein>
<keyword id="KW-0903">Direct protein sequencing</keyword>
<keyword id="KW-0236">DNA replication inhibitor</keyword>
<keyword id="KW-0238">DNA-binding</keyword>
<keyword id="KW-0614">Plasmid</keyword>
<keyword id="KW-0615">Plasmid copy control</keyword>
<keyword id="KW-0804">Transcription</keyword>
<keyword id="KW-0805">Transcription regulation</keyword>
<comment type="function">
    <text>Acts in trans as a negative regulatory element in pE194 replication.</text>
</comment>
<comment type="similarity">
    <text evidence="1">Belongs to the transcriptional regulatory CopG/NikR family.</text>
</comment>
<proteinExistence type="evidence at protein level"/>
<geneLocation type="plasmid">
    <name>pE194</name>
</geneLocation>
<feature type="chain" id="PRO_0000139315" description="Cop-6 protein">
    <location>
        <begin position="1"/>
        <end position="55"/>
    </location>
</feature>